<gene>
    <name evidence="1" type="primary">kdsA</name>
    <name type="ordered locus">Fphi_0230</name>
</gene>
<name>KDSA_FRAP2</name>
<sequence>MKIANFEVGNGKPFFLMSGPCVIESEQMAMDTAGYLAEVTKDLGINFVYKSSFDKANRSSINSFRGLGVDKGLEILAKVKKTYNVPVVTDVHEDTPFAEVAEVVDVMQTPAFLCRQTNFILDVCKQGKPVNIKKGQFLAPWDMQHVVAKAKSTGNEQIMVCERGVSFGYNNLVSDMRSLEIMKSTGCPVVFDATHSVQLPGGQGSSSGGQREFVPVLSKAAMAVGIDGLFMETHPKPAEALSDGPNSFPMYKIKEFLSLLKELDHLVKSQPKIEL</sequence>
<comment type="catalytic activity">
    <reaction evidence="1">
        <text>D-arabinose 5-phosphate + phosphoenolpyruvate + H2O = 3-deoxy-alpha-D-manno-2-octulosonate-8-phosphate + phosphate</text>
        <dbReference type="Rhea" id="RHEA:14053"/>
        <dbReference type="ChEBI" id="CHEBI:15377"/>
        <dbReference type="ChEBI" id="CHEBI:43474"/>
        <dbReference type="ChEBI" id="CHEBI:57693"/>
        <dbReference type="ChEBI" id="CHEBI:58702"/>
        <dbReference type="ChEBI" id="CHEBI:85985"/>
        <dbReference type="EC" id="2.5.1.55"/>
    </reaction>
</comment>
<comment type="pathway">
    <text evidence="1">Carbohydrate biosynthesis; 3-deoxy-D-manno-octulosonate biosynthesis; 3-deoxy-D-manno-octulosonate from D-ribulose 5-phosphate: step 2/3.</text>
</comment>
<comment type="pathway">
    <text evidence="1">Bacterial outer membrane biogenesis; lipopolysaccharide biosynthesis.</text>
</comment>
<comment type="subcellular location">
    <subcellularLocation>
        <location evidence="1">Cytoplasm</location>
    </subcellularLocation>
</comment>
<comment type="similarity">
    <text evidence="1">Belongs to the KdsA family.</text>
</comment>
<protein>
    <recommendedName>
        <fullName evidence="1">2-dehydro-3-deoxyphosphooctonate aldolase</fullName>
        <ecNumber evidence="1">2.5.1.55</ecNumber>
    </recommendedName>
    <alternativeName>
        <fullName evidence="1">3-deoxy-D-manno-octulosonic acid 8-phosphate synthase</fullName>
    </alternativeName>
    <alternativeName>
        <fullName evidence="1">KDO-8-phosphate synthase</fullName>
        <shortName evidence="1">KDO 8-P synthase</shortName>
        <shortName evidence="1">KDOPS</shortName>
    </alternativeName>
    <alternativeName>
        <fullName evidence="1">Phospho-2-dehydro-3-deoxyoctonate aldolase</fullName>
    </alternativeName>
</protein>
<feature type="chain" id="PRO_1000117779" description="2-dehydro-3-deoxyphosphooctonate aldolase">
    <location>
        <begin position="1"/>
        <end position="275"/>
    </location>
</feature>
<accession>B0TZ07</accession>
<keyword id="KW-0963">Cytoplasm</keyword>
<keyword id="KW-0448">Lipopolysaccharide biosynthesis</keyword>
<keyword id="KW-0808">Transferase</keyword>
<reference key="1">
    <citation type="submission" date="2007-12" db="EMBL/GenBank/DDBJ databases">
        <title>Complete sequence of chromosome of Francisella philomiragia subsp. philomiragia ATCC 25017.</title>
        <authorList>
            <consortium name="US DOE Joint Genome Institute"/>
            <person name="Copeland A."/>
            <person name="Lucas S."/>
            <person name="Lapidus A."/>
            <person name="Barry K."/>
            <person name="Detter J.C."/>
            <person name="Glavina del Rio T."/>
            <person name="Hammon N."/>
            <person name="Israni S."/>
            <person name="Dalin E."/>
            <person name="Tice H."/>
            <person name="Pitluck S."/>
            <person name="Chain P."/>
            <person name="Malfatti S."/>
            <person name="Shin M."/>
            <person name="Vergez L."/>
            <person name="Schmutz J."/>
            <person name="Larimer F."/>
            <person name="Land M."/>
            <person name="Hauser L."/>
            <person name="Richardson P."/>
        </authorList>
    </citation>
    <scope>NUCLEOTIDE SEQUENCE [LARGE SCALE GENOMIC DNA]</scope>
    <source>
        <strain>ATCC 25017 / CCUG 19701 / FSC 153 / O#319-036</strain>
    </source>
</reference>
<dbReference type="EC" id="2.5.1.55" evidence="1"/>
<dbReference type="EMBL" id="CP000937">
    <property type="protein sequence ID" value="ABZ86446.1"/>
    <property type="molecule type" value="Genomic_DNA"/>
</dbReference>
<dbReference type="SMR" id="B0TZ07"/>
<dbReference type="KEGG" id="fph:Fphi_0230"/>
<dbReference type="eggNOG" id="COG2877">
    <property type="taxonomic scope" value="Bacteria"/>
</dbReference>
<dbReference type="HOGENOM" id="CLU_036666_0_0_6"/>
<dbReference type="UniPathway" id="UPA00030"/>
<dbReference type="UniPathway" id="UPA00357">
    <property type="reaction ID" value="UER00474"/>
</dbReference>
<dbReference type="GO" id="GO:0005737">
    <property type="term" value="C:cytoplasm"/>
    <property type="evidence" value="ECO:0007669"/>
    <property type="project" value="UniProtKB-SubCell"/>
</dbReference>
<dbReference type="GO" id="GO:0008676">
    <property type="term" value="F:3-deoxy-8-phosphooctulonate synthase activity"/>
    <property type="evidence" value="ECO:0007669"/>
    <property type="project" value="UniProtKB-UniRule"/>
</dbReference>
<dbReference type="GO" id="GO:0019294">
    <property type="term" value="P:keto-3-deoxy-D-manno-octulosonic acid biosynthetic process"/>
    <property type="evidence" value="ECO:0007669"/>
    <property type="project" value="UniProtKB-UniRule"/>
</dbReference>
<dbReference type="Gene3D" id="3.20.20.70">
    <property type="entry name" value="Aldolase class I"/>
    <property type="match status" value="1"/>
</dbReference>
<dbReference type="HAMAP" id="MF_00056">
    <property type="entry name" value="KDO8P_synth"/>
    <property type="match status" value="1"/>
</dbReference>
<dbReference type="InterPro" id="IPR013785">
    <property type="entry name" value="Aldolase_TIM"/>
</dbReference>
<dbReference type="InterPro" id="IPR006218">
    <property type="entry name" value="DAHP1/KDSA"/>
</dbReference>
<dbReference type="InterPro" id="IPR006269">
    <property type="entry name" value="KDO8P_synthase"/>
</dbReference>
<dbReference type="NCBIfam" id="TIGR01362">
    <property type="entry name" value="KDO8P_synth"/>
    <property type="match status" value="1"/>
</dbReference>
<dbReference type="NCBIfam" id="NF003543">
    <property type="entry name" value="PRK05198.1"/>
    <property type="match status" value="1"/>
</dbReference>
<dbReference type="PANTHER" id="PTHR21057">
    <property type="entry name" value="PHOSPHO-2-DEHYDRO-3-DEOXYHEPTONATE ALDOLASE"/>
    <property type="match status" value="1"/>
</dbReference>
<dbReference type="Pfam" id="PF00793">
    <property type="entry name" value="DAHP_synth_1"/>
    <property type="match status" value="1"/>
</dbReference>
<dbReference type="SUPFAM" id="SSF51569">
    <property type="entry name" value="Aldolase"/>
    <property type="match status" value="1"/>
</dbReference>
<evidence type="ECO:0000255" key="1">
    <source>
        <dbReference type="HAMAP-Rule" id="MF_00056"/>
    </source>
</evidence>
<proteinExistence type="inferred from homology"/>
<organism>
    <name type="scientific">Francisella philomiragia subsp. philomiragia (strain ATCC 25017 / CCUG 19701 / FSC 153 / O#319-036)</name>
    <dbReference type="NCBI Taxonomy" id="484022"/>
    <lineage>
        <taxon>Bacteria</taxon>
        <taxon>Pseudomonadati</taxon>
        <taxon>Pseudomonadota</taxon>
        <taxon>Gammaproteobacteria</taxon>
        <taxon>Thiotrichales</taxon>
        <taxon>Francisellaceae</taxon>
        <taxon>Francisella</taxon>
    </lineage>
</organism>